<name>RS21_GLAP5</name>
<gene>
    <name evidence="1" type="primary">rpsU</name>
    <name type="ordered locus">HAPS_1196</name>
</gene>
<reference key="1">
    <citation type="journal article" date="2009" name="J. Bacteriol.">
        <title>Complete genome sequence of Haemophilus parasuis SH0165.</title>
        <authorList>
            <person name="Yue M."/>
            <person name="Yang F."/>
            <person name="Yang J."/>
            <person name="Bei W."/>
            <person name="Cai X."/>
            <person name="Chen L."/>
            <person name="Dong J."/>
            <person name="Zhou R."/>
            <person name="Jin M."/>
            <person name="Jin Q."/>
            <person name="Chen H."/>
        </authorList>
    </citation>
    <scope>NUCLEOTIDE SEQUENCE [LARGE SCALE GENOMIC DNA]</scope>
    <source>
        <strain>SH0165</strain>
    </source>
</reference>
<evidence type="ECO:0000255" key="1">
    <source>
        <dbReference type="HAMAP-Rule" id="MF_00358"/>
    </source>
</evidence>
<evidence type="ECO:0000256" key="2">
    <source>
        <dbReference type="SAM" id="MobiDB-lite"/>
    </source>
</evidence>
<evidence type="ECO:0000305" key="3"/>
<organism>
    <name type="scientific">Glaesserella parasuis serovar 5 (strain SH0165)</name>
    <name type="common">Haemophilus parasuis</name>
    <dbReference type="NCBI Taxonomy" id="557723"/>
    <lineage>
        <taxon>Bacteria</taxon>
        <taxon>Pseudomonadati</taxon>
        <taxon>Pseudomonadota</taxon>
        <taxon>Gammaproteobacteria</taxon>
        <taxon>Pasteurellales</taxon>
        <taxon>Pasteurellaceae</taxon>
        <taxon>Glaesserella</taxon>
    </lineage>
</organism>
<protein>
    <recommendedName>
        <fullName evidence="1">Small ribosomal subunit protein bS21</fullName>
    </recommendedName>
    <alternativeName>
        <fullName evidence="3">30S ribosomal protein S21</fullName>
    </alternativeName>
</protein>
<feature type="chain" id="PRO_1000194295" description="Small ribosomal subunit protein bS21">
    <location>
        <begin position="1"/>
        <end position="71"/>
    </location>
</feature>
<feature type="region of interest" description="Disordered" evidence="2">
    <location>
        <begin position="48"/>
        <end position="71"/>
    </location>
</feature>
<feature type="compositionally biased region" description="Basic residues" evidence="2">
    <location>
        <begin position="48"/>
        <end position="59"/>
    </location>
</feature>
<feature type="compositionally biased region" description="Basic and acidic residues" evidence="2">
    <location>
        <begin position="60"/>
        <end position="71"/>
    </location>
</feature>
<sequence length="71" mass="8538">MPVIKVRENESFDVALRRFKRSCEKAGLLAEVRAREFYEKPTTIRKREKASLAKRHAKRNFRENARNTRLY</sequence>
<keyword id="KW-1185">Reference proteome</keyword>
<keyword id="KW-0687">Ribonucleoprotein</keyword>
<keyword id="KW-0689">Ribosomal protein</keyword>
<proteinExistence type="inferred from homology"/>
<accession>B8F647</accession>
<comment type="similarity">
    <text evidence="1">Belongs to the bacterial ribosomal protein bS21 family.</text>
</comment>
<dbReference type="EMBL" id="CP001321">
    <property type="protein sequence ID" value="ACL32799.1"/>
    <property type="molecule type" value="Genomic_DNA"/>
</dbReference>
<dbReference type="RefSeq" id="WP_005712190.1">
    <property type="nucleotide sequence ID" value="NC_011852.1"/>
</dbReference>
<dbReference type="SMR" id="B8F647"/>
<dbReference type="STRING" id="557723.HAPS_1196"/>
<dbReference type="GeneID" id="66618159"/>
<dbReference type="KEGG" id="hap:HAPS_1196"/>
<dbReference type="HOGENOM" id="CLU_159258_1_0_6"/>
<dbReference type="Proteomes" id="UP000006743">
    <property type="component" value="Chromosome"/>
</dbReference>
<dbReference type="GO" id="GO:1990904">
    <property type="term" value="C:ribonucleoprotein complex"/>
    <property type="evidence" value="ECO:0007669"/>
    <property type="project" value="UniProtKB-KW"/>
</dbReference>
<dbReference type="GO" id="GO:0005840">
    <property type="term" value="C:ribosome"/>
    <property type="evidence" value="ECO:0007669"/>
    <property type="project" value="UniProtKB-KW"/>
</dbReference>
<dbReference type="GO" id="GO:0003735">
    <property type="term" value="F:structural constituent of ribosome"/>
    <property type="evidence" value="ECO:0007669"/>
    <property type="project" value="InterPro"/>
</dbReference>
<dbReference type="GO" id="GO:0006412">
    <property type="term" value="P:translation"/>
    <property type="evidence" value="ECO:0007669"/>
    <property type="project" value="UniProtKB-UniRule"/>
</dbReference>
<dbReference type="Gene3D" id="1.20.5.1150">
    <property type="entry name" value="Ribosomal protein S8"/>
    <property type="match status" value="1"/>
</dbReference>
<dbReference type="HAMAP" id="MF_00358">
    <property type="entry name" value="Ribosomal_bS21"/>
    <property type="match status" value="1"/>
</dbReference>
<dbReference type="InterPro" id="IPR001911">
    <property type="entry name" value="Ribosomal_bS21"/>
</dbReference>
<dbReference type="InterPro" id="IPR018278">
    <property type="entry name" value="Ribosomal_bS21_CS"/>
</dbReference>
<dbReference type="InterPro" id="IPR038380">
    <property type="entry name" value="Ribosomal_bS21_sf"/>
</dbReference>
<dbReference type="NCBIfam" id="TIGR00030">
    <property type="entry name" value="S21p"/>
    <property type="match status" value="1"/>
</dbReference>
<dbReference type="PANTHER" id="PTHR21109">
    <property type="entry name" value="MITOCHONDRIAL 28S RIBOSOMAL PROTEIN S21"/>
    <property type="match status" value="1"/>
</dbReference>
<dbReference type="PANTHER" id="PTHR21109:SF22">
    <property type="entry name" value="SMALL RIBOSOMAL SUBUNIT PROTEIN BS21"/>
    <property type="match status" value="1"/>
</dbReference>
<dbReference type="Pfam" id="PF01165">
    <property type="entry name" value="Ribosomal_S21"/>
    <property type="match status" value="1"/>
</dbReference>
<dbReference type="PRINTS" id="PR00976">
    <property type="entry name" value="RIBOSOMALS21"/>
</dbReference>
<dbReference type="PROSITE" id="PS01181">
    <property type="entry name" value="RIBOSOMAL_S21"/>
    <property type="match status" value="1"/>
</dbReference>